<sequence length="229" mass="26195">MLSLIVLLEKETLRFSQMVLAWGNGRVGASGGIGIHFPNGELQDISLEFDKGCCTNQRTELYAILYAIQYIDDNFDLNKCKVMIKTDSTYSVNSITKWAEGHSRNDWCKRTGEPIANREFIQEIYEYYQNFNIDFEWVEAHTGQTDSESIANAQADFLANSAAKRAARDKKICRPSSSGSKRNSREFYCEKSSKQVYNTPYRSKSRASINGFPIDDDFEIELVKRRSDN</sequence>
<gene>
    <name type="primary">RNH1</name>
    <name type="ordered locus">MIMI_R299</name>
</gene>
<protein>
    <recommendedName>
        <fullName>Probable ribonuclease H</fullName>
        <shortName>RNase H</shortName>
        <ecNumber>3.1.26.4</ecNumber>
    </recommendedName>
</protein>
<organism>
    <name type="scientific">Acanthamoeba polyphaga mimivirus</name>
    <name type="common">APMV</name>
    <dbReference type="NCBI Taxonomy" id="212035"/>
    <lineage>
        <taxon>Viruses</taxon>
        <taxon>Varidnaviria</taxon>
        <taxon>Bamfordvirae</taxon>
        <taxon>Nucleocytoviricota</taxon>
        <taxon>Megaviricetes</taxon>
        <taxon>Imitervirales</taxon>
        <taxon>Mimiviridae</taxon>
        <taxon>Megamimivirinae</taxon>
        <taxon>Mimivirus</taxon>
        <taxon>Mimivirus bradfordmassiliense</taxon>
    </lineage>
</organism>
<feature type="chain" id="PRO_0000195439" description="Probable ribonuclease H">
    <location>
        <begin position="1"/>
        <end position="229"/>
    </location>
</feature>
<feature type="domain" description="RNase H type-1" evidence="2">
    <location>
        <begin position="42"/>
        <end position="164"/>
    </location>
</feature>
<feature type="binding site" evidence="1">
    <location>
        <position position="60"/>
    </location>
    <ligand>
        <name>a divalent metal cation</name>
        <dbReference type="ChEBI" id="CHEBI:60240"/>
    </ligand>
</feature>
<feature type="binding site" evidence="1">
    <location>
        <position position="87"/>
    </location>
    <ligand>
        <name>a divalent metal cation</name>
        <dbReference type="ChEBI" id="CHEBI:60240"/>
    </ligand>
</feature>
<feature type="binding site" evidence="1">
    <location>
        <position position="156"/>
    </location>
    <ligand>
        <name>a divalent metal cation</name>
        <dbReference type="ChEBI" id="CHEBI:60240"/>
    </ligand>
</feature>
<evidence type="ECO:0000250" key="1"/>
<evidence type="ECO:0000255" key="2">
    <source>
        <dbReference type="PROSITE-ProRule" id="PRU00408"/>
    </source>
</evidence>
<evidence type="ECO:0000305" key="3"/>
<name>RNH_MIMIV</name>
<proteinExistence type="inferred from homology"/>
<dbReference type="EC" id="3.1.26.4"/>
<dbReference type="EMBL" id="AY653733">
    <property type="protein sequence ID" value="AAV50571.1"/>
    <property type="molecule type" value="Genomic_DNA"/>
</dbReference>
<dbReference type="SMR" id="Q5UPY1"/>
<dbReference type="Proteomes" id="UP000001134">
    <property type="component" value="Genome"/>
</dbReference>
<dbReference type="GO" id="GO:0046872">
    <property type="term" value="F:metal ion binding"/>
    <property type="evidence" value="ECO:0007669"/>
    <property type="project" value="UniProtKB-KW"/>
</dbReference>
<dbReference type="GO" id="GO:0003676">
    <property type="term" value="F:nucleic acid binding"/>
    <property type="evidence" value="ECO:0007669"/>
    <property type="project" value="InterPro"/>
</dbReference>
<dbReference type="GO" id="GO:0004523">
    <property type="term" value="F:RNA-DNA hybrid ribonuclease activity"/>
    <property type="evidence" value="ECO:0007669"/>
    <property type="project" value="UniProtKB-EC"/>
</dbReference>
<dbReference type="GO" id="GO:0043137">
    <property type="term" value="P:DNA replication, removal of RNA primer"/>
    <property type="evidence" value="ECO:0007669"/>
    <property type="project" value="TreeGrafter"/>
</dbReference>
<dbReference type="CDD" id="cd09280">
    <property type="entry name" value="RNase_HI_eukaryote_like"/>
    <property type="match status" value="1"/>
</dbReference>
<dbReference type="Gene3D" id="3.30.420.10">
    <property type="entry name" value="Ribonuclease H-like superfamily/Ribonuclease H"/>
    <property type="match status" value="1"/>
</dbReference>
<dbReference type="InterPro" id="IPR050092">
    <property type="entry name" value="RNase_H"/>
</dbReference>
<dbReference type="InterPro" id="IPR012337">
    <property type="entry name" value="RNaseH-like_sf"/>
</dbReference>
<dbReference type="InterPro" id="IPR002156">
    <property type="entry name" value="RNaseH_domain"/>
</dbReference>
<dbReference type="InterPro" id="IPR036397">
    <property type="entry name" value="RNaseH_sf"/>
</dbReference>
<dbReference type="PANTHER" id="PTHR10642">
    <property type="entry name" value="RIBONUCLEASE H1"/>
    <property type="match status" value="1"/>
</dbReference>
<dbReference type="PANTHER" id="PTHR10642:SF26">
    <property type="entry name" value="RIBONUCLEASE H1"/>
    <property type="match status" value="1"/>
</dbReference>
<dbReference type="Pfam" id="PF00075">
    <property type="entry name" value="RNase_H"/>
    <property type="match status" value="1"/>
</dbReference>
<dbReference type="SUPFAM" id="SSF53098">
    <property type="entry name" value="Ribonuclease H-like"/>
    <property type="match status" value="1"/>
</dbReference>
<dbReference type="PROSITE" id="PS50879">
    <property type="entry name" value="RNASE_H_1"/>
    <property type="match status" value="1"/>
</dbReference>
<comment type="function">
    <text evidence="1">Endonuclease that specifically degrades the RNA of RNA-DNA hybrids.</text>
</comment>
<comment type="catalytic activity">
    <reaction evidence="2">
        <text>Endonucleolytic cleavage to 5'-phosphomonoester.</text>
        <dbReference type="EC" id="3.1.26.4"/>
    </reaction>
</comment>
<comment type="cofactor">
    <cofactor evidence="1">
        <name>a divalent metal cation</name>
        <dbReference type="ChEBI" id="CHEBI:60240"/>
    </cofactor>
    <text evidence="1">Binds 1 divalent metal ion per subunit. May bind a second metal ion at a regulatory site, or after substrate binding.</text>
</comment>
<comment type="similarity">
    <text evidence="3">Belongs to the RNase H family.</text>
</comment>
<accession>Q5UPY1</accession>
<keyword id="KW-0255">Endonuclease</keyword>
<keyword id="KW-0378">Hydrolase</keyword>
<keyword id="KW-0479">Metal-binding</keyword>
<keyword id="KW-0540">Nuclease</keyword>
<keyword id="KW-1185">Reference proteome</keyword>
<organismHost>
    <name type="scientific">Acanthamoeba polyphaga</name>
    <name type="common">Amoeba</name>
    <dbReference type="NCBI Taxonomy" id="5757"/>
</organismHost>
<reference key="1">
    <citation type="journal article" date="2004" name="Science">
        <title>The 1.2-megabase genome sequence of Mimivirus.</title>
        <authorList>
            <person name="Raoult D."/>
            <person name="Audic S."/>
            <person name="Robert C."/>
            <person name="Abergel C."/>
            <person name="Renesto P."/>
            <person name="Ogata H."/>
            <person name="La Scola B."/>
            <person name="Susan M."/>
            <person name="Claverie J.-M."/>
        </authorList>
    </citation>
    <scope>NUCLEOTIDE SEQUENCE [LARGE SCALE GENOMIC DNA]</scope>
    <source>
        <strain>Rowbotham-Bradford</strain>
    </source>
</reference>